<reference key="1">
    <citation type="journal article" date="2000" name="Nucleic Acids Res.">
        <title>Genome sequences of Chlamydia trachomatis MoPn and Chlamydia pneumoniae AR39.</title>
        <authorList>
            <person name="Read T.D."/>
            <person name="Brunham R.C."/>
            <person name="Shen C."/>
            <person name="Gill S.R."/>
            <person name="Heidelberg J.F."/>
            <person name="White O."/>
            <person name="Hickey E.K."/>
            <person name="Peterson J.D."/>
            <person name="Utterback T.R."/>
            <person name="Berry K.J."/>
            <person name="Bass S."/>
            <person name="Linher K.D."/>
            <person name="Weidman J.F."/>
            <person name="Khouri H.M."/>
            <person name="Craven B."/>
            <person name="Bowman C."/>
            <person name="Dodson R.J."/>
            <person name="Gwinn M.L."/>
            <person name="Nelson W.C."/>
            <person name="DeBoy R.T."/>
            <person name="Kolonay J.F."/>
            <person name="McClarty G."/>
            <person name="Salzberg S.L."/>
            <person name="Eisen J.A."/>
            <person name="Fraser C.M."/>
        </authorList>
    </citation>
    <scope>NUCLEOTIDE SEQUENCE [LARGE SCALE GENOMIC DNA]</scope>
    <source>
        <strain>MoPn / Nigg</strain>
    </source>
</reference>
<evidence type="ECO:0000255" key="1">
    <source>
        <dbReference type="HAMAP-Rule" id="MF_00473"/>
    </source>
</evidence>
<evidence type="ECO:0000305" key="2"/>
<protein>
    <recommendedName>
        <fullName evidence="1">Glucose-6-phosphate isomerase</fullName>
        <shortName evidence="1">GPI</shortName>
        <ecNumber evidence="1">5.3.1.9</ecNumber>
    </recommendedName>
    <alternativeName>
        <fullName evidence="1">Phosphoglucose isomerase</fullName>
        <shortName evidence="1">PGI</shortName>
    </alternativeName>
    <alternativeName>
        <fullName evidence="1">Phosphohexose isomerase</fullName>
        <shortName evidence="1">PHI</shortName>
    </alternativeName>
</protein>
<gene>
    <name evidence="1" type="primary">pgi</name>
    <name type="ordered locus">TC_0657</name>
</gene>
<keyword id="KW-0963">Cytoplasm</keyword>
<keyword id="KW-0312">Gluconeogenesis</keyword>
<keyword id="KW-0324">Glycolysis</keyword>
<keyword id="KW-0413">Isomerase</keyword>
<sequence>MGKSFLDCESLIALQEIATNPVDLTLPGTLSQDRIQQYALSAEGFTYSYATERVDDRSLNALRMLAEERELIKQMESMQQGAVMNYIEGFQSESRSVLHTATRAWVRDHDLKDEAASIANHSEREAHRLAEFLYAARSKFSTLVQIGIGGSELGPKAMYFAMQGICPSDKRIFFVSNIDPDNAAEVLKEVDLKQTLIVVVSKSGTTLEPSVNEELFKRAYQDKGLSVADHFVAVTAEGSPMDDKTHYLEVFHLWDSVGGRFSATSMVGGVVLGFAFGYEVFFEFLQGAASMDAHALTPIMEKNLPLLSAMLGIWNRNVLKYPTTAVIPYATGLKYFTAHLQQCGMESNGKSISRQGKEVHFATSPIIWGDVGTNCQHSFFQSLHQGTDIVPVEFIGFLQNQRGIDCVLSGSSSSQKLFANLVAQSLALAQGRDNDNPNKRFKGNRPSSILVAQQLSPRIAGGLLAFYEHKFAFQGFCWGINSFDQEGVSLGKELATQIIGLMSGAAPIEFPEARELLRLFNVLQ</sequence>
<accession>Q9PK16</accession>
<dbReference type="EC" id="5.3.1.9" evidence="1"/>
<dbReference type="EMBL" id="AE002160">
    <property type="protein sequence ID" value="AAF39481.1"/>
    <property type="molecule type" value="Genomic_DNA"/>
</dbReference>
<dbReference type="PIR" id="E81678">
    <property type="entry name" value="E81678"/>
</dbReference>
<dbReference type="SMR" id="Q9PK16"/>
<dbReference type="KEGG" id="cmu:TC_0657"/>
<dbReference type="eggNOG" id="COG0166">
    <property type="taxonomic scope" value="Bacteria"/>
</dbReference>
<dbReference type="HOGENOM" id="CLU_017947_3_1_0"/>
<dbReference type="UniPathway" id="UPA00109">
    <property type="reaction ID" value="UER00181"/>
</dbReference>
<dbReference type="UniPathway" id="UPA00138"/>
<dbReference type="Proteomes" id="UP000000800">
    <property type="component" value="Chromosome"/>
</dbReference>
<dbReference type="GO" id="GO:0005829">
    <property type="term" value="C:cytosol"/>
    <property type="evidence" value="ECO:0007669"/>
    <property type="project" value="TreeGrafter"/>
</dbReference>
<dbReference type="GO" id="GO:0097367">
    <property type="term" value="F:carbohydrate derivative binding"/>
    <property type="evidence" value="ECO:0007669"/>
    <property type="project" value="InterPro"/>
</dbReference>
<dbReference type="GO" id="GO:0004347">
    <property type="term" value="F:glucose-6-phosphate isomerase activity"/>
    <property type="evidence" value="ECO:0007669"/>
    <property type="project" value="UniProtKB-UniRule"/>
</dbReference>
<dbReference type="GO" id="GO:0048029">
    <property type="term" value="F:monosaccharide binding"/>
    <property type="evidence" value="ECO:0007669"/>
    <property type="project" value="TreeGrafter"/>
</dbReference>
<dbReference type="GO" id="GO:0006094">
    <property type="term" value="P:gluconeogenesis"/>
    <property type="evidence" value="ECO:0007669"/>
    <property type="project" value="UniProtKB-UniRule"/>
</dbReference>
<dbReference type="GO" id="GO:0051156">
    <property type="term" value="P:glucose 6-phosphate metabolic process"/>
    <property type="evidence" value="ECO:0007669"/>
    <property type="project" value="TreeGrafter"/>
</dbReference>
<dbReference type="GO" id="GO:0006096">
    <property type="term" value="P:glycolytic process"/>
    <property type="evidence" value="ECO:0007669"/>
    <property type="project" value="UniProtKB-UniRule"/>
</dbReference>
<dbReference type="CDD" id="cd05015">
    <property type="entry name" value="SIS_PGI_1"/>
    <property type="match status" value="1"/>
</dbReference>
<dbReference type="CDD" id="cd05016">
    <property type="entry name" value="SIS_PGI_2"/>
    <property type="match status" value="1"/>
</dbReference>
<dbReference type="Gene3D" id="1.10.1390.10">
    <property type="match status" value="1"/>
</dbReference>
<dbReference type="Gene3D" id="3.40.50.10490">
    <property type="entry name" value="Glucose-6-phosphate isomerase like protein, domain 1"/>
    <property type="match status" value="2"/>
</dbReference>
<dbReference type="HAMAP" id="MF_00473">
    <property type="entry name" value="G6P_isomerase"/>
    <property type="match status" value="1"/>
</dbReference>
<dbReference type="InterPro" id="IPR001672">
    <property type="entry name" value="G6P_Isomerase"/>
</dbReference>
<dbReference type="InterPro" id="IPR023096">
    <property type="entry name" value="G6P_Isomerase_C"/>
</dbReference>
<dbReference type="InterPro" id="IPR018189">
    <property type="entry name" value="Phosphoglucose_isomerase_CS"/>
</dbReference>
<dbReference type="InterPro" id="IPR046348">
    <property type="entry name" value="SIS_dom_sf"/>
</dbReference>
<dbReference type="InterPro" id="IPR035476">
    <property type="entry name" value="SIS_PGI_1"/>
</dbReference>
<dbReference type="InterPro" id="IPR035482">
    <property type="entry name" value="SIS_PGI_2"/>
</dbReference>
<dbReference type="NCBIfam" id="NF010695">
    <property type="entry name" value="PRK14095.1"/>
    <property type="match status" value="1"/>
</dbReference>
<dbReference type="PANTHER" id="PTHR11469">
    <property type="entry name" value="GLUCOSE-6-PHOSPHATE ISOMERASE"/>
    <property type="match status" value="1"/>
</dbReference>
<dbReference type="PANTHER" id="PTHR11469:SF1">
    <property type="entry name" value="GLUCOSE-6-PHOSPHATE ISOMERASE"/>
    <property type="match status" value="1"/>
</dbReference>
<dbReference type="Pfam" id="PF00342">
    <property type="entry name" value="PGI"/>
    <property type="match status" value="1"/>
</dbReference>
<dbReference type="PRINTS" id="PR00662">
    <property type="entry name" value="G6PISOMERASE"/>
</dbReference>
<dbReference type="SUPFAM" id="SSF53697">
    <property type="entry name" value="SIS domain"/>
    <property type="match status" value="1"/>
</dbReference>
<dbReference type="PROSITE" id="PS00765">
    <property type="entry name" value="P_GLUCOSE_ISOMERASE_1"/>
    <property type="match status" value="1"/>
</dbReference>
<dbReference type="PROSITE" id="PS00174">
    <property type="entry name" value="P_GLUCOSE_ISOMERASE_2"/>
    <property type="match status" value="1"/>
</dbReference>
<dbReference type="PROSITE" id="PS51463">
    <property type="entry name" value="P_GLUCOSE_ISOMERASE_3"/>
    <property type="match status" value="1"/>
</dbReference>
<name>G6PI_CHLMU</name>
<proteinExistence type="inferred from homology"/>
<feature type="chain" id="PRO_0000180618" description="Glucose-6-phosphate isomerase">
    <location>
        <begin position="1"/>
        <end position="524"/>
    </location>
</feature>
<feature type="active site" description="Proton donor" evidence="1">
    <location>
        <position position="346"/>
    </location>
</feature>
<feature type="active site" evidence="1">
    <location>
        <position position="377"/>
    </location>
</feature>
<feature type="active site" evidence="1">
    <location>
        <position position="492"/>
    </location>
</feature>
<organism>
    <name type="scientific">Chlamydia muridarum (strain MoPn / Nigg)</name>
    <dbReference type="NCBI Taxonomy" id="243161"/>
    <lineage>
        <taxon>Bacteria</taxon>
        <taxon>Pseudomonadati</taxon>
        <taxon>Chlamydiota</taxon>
        <taxon>Chlamydiia</taxon>
        <taxon>Chlamydiales</taxon>
        <taxon>Chlamydiaceae</taxon>
        <taxon>Chlamydia/Chlamydophila group</taxon>
        <taxon>Chlamydia</taxon>
    </lineage>
</organism>
<comment type="function">
    <text evidence="1">Catalyzes the reversible isomerization of glucose-6-phosphate to fructose-6-phosphate.</text>
</comment>
<comment type="catalytic activity">
    <reaction evidence="1">
        <text>alpha-D-glucose 6-phosphate = beta-D-fructose 6-phosphate</text>
        <dbReference type="Rhea" id="RHEA:11816"/>
        <dbReference type="ChEBI" id="CHEBI:57634"/>
        <dbReference type="ChEBI" id="CHEBI:58225"/>
        <dbReference type="EC" id="5.3.1.9"/>
    </reaction>
</comment>
<comment type="pathway">
    <text evidence="1">Carbohydrate biosynthesis; gluconeogenesis.</text>
</comment>
<comment type="pathway">
    <text evidence="1">Carbohydrate degradation; glycolysis; D-glyceraldehyde 3-phosphate and glycerone phosphate from D-glucose: step 2/4.</text>
</comment>
<comment type="subcellular location">
    <subcellularLocation>
        <location evidence="1">Cytoplasm</location>
    </subcellularLocation>
</comment>
<comment type="similarity">
    <text evidence="1 2">Belongs to the GPI family.</text>
</comment>